<feature type="chain" id="PRO_1000194968" description="Ribosomal RNA large subunit methyltransferase E">
    <location>
        <begin position="1"/>
        <end position="216"/>
    </location>
</feature>
<feature type="active site" description="Proton acceptor" evidence="1">
    <location>
        <position position="168"/>
    </location>
</feature>
<feature type="binding site" evidence="1">
    <location>
        <position position="67"/>
    </location>
    <ligand>
        <name>S-adenosyl-L-methionine</name>
        <dbReference type="ChEBI" id="CHEBI:59789"/>
    </ligand>
</feature>
<feature type="binding site" evidence="1">
    <location>
        <position position="69"/>
    </location>
    <ligand>
        <name>S-adenosyl-L-methionine</name>
        <dbReference type="ChEBI" id="CHEBI:59789"/>
    </ligand>
</feature>
<feature type="binding site" evidence="1">
    <location>
        <position position="87"/>
    </location>
    <ligand>
        <name>S-adenosyl-L-methionine</name>
        <dbReference type="ChEBI" id="CHEBI:59789"/>
    </ligand>
</feature>
<feature type="binding site" evidence="1">
    <location>
        <position position="103"/>
    </location>
    <ligand>
        <name>S-adenosyl-L-methionine</name>
        <dbReference type="ChEBI" id="CHEBI:59789"/>
    </ligand>
</feature>
<feature type="binding site" evidence="1">
    <location>
        <position position="128"/>
    </location>
    <ligand>
        <name>S-adenosyl-L-methionine</name>
        <dbReference type="ChEBI" id="CHEBI:59789"/>
    </ligand>
</feature>
<evidence type="ECO:0000255" key="1">
    <source>
        <dbReference type="HAMAP-Rule" id="MF_01547"/>
    </source>
</evidence>
<organism>
    <name type="scientific">Acinetobacter baumannii (strain AB307-0294)</name>
    <dbReference type="NCBI Taxonomy" id="557600"/>
    <lineage>
        <taxon>Bacteria</taxon>
        <taxon>Pseudomonadati</taxon>
        <taxon>Pseudomonadota</taxon>
        <taxon>Gammaproteobacteria</taxon>
        <taxon>Moraxellales</taxon>
        <taxon>Moraxellaceae</taxon>
        <taxon>Acinetobacter</taxon>
        <taxon>Acinetobacter calcoaceticus/baumannii complex</taxon>
    </lineage>
</organism>
<dbReference type="EC" id="2.1.1.166" evidence="1"/>
<dbReference type="EMBL" id="CP001172">
    <property type="protein sequence ID" value="ACJ56868.1"/>
    <property type="molecule type" value="Genomic_DNA"/>
</dbReference>
<dbReference type="RefSeq" id="WP_000235573.1">
    <property type="nucleotide sequence ID" value="NZ_CP001172.1"/>
</dbReference>
<dbReference type="SMR" id="B7GY18"/>
<dbReference type="GeneID" id="92894959"/>
<dbReference type="HOGENOM" id="CLU_009422_4_0_6"/>
<dbReference type="Proteomes" id="UP000006924">
    <property type="component" value="Chromosome"/>
</dbReference>
<dbReference type="GO" id="GO:0005737">
    <property type="term" value="C:cytoplasm"/>
    <property type="evidence" value="ECO:0007669"/>
    <property type="project" value="UniProtKB-SubCell"/>
</dbReference>
<dbReference type="GO" id="GO:0008650">
    <property type="term" value="F:rRNA (uridine-2'-O-)-methyltransferase activity"/>
    <property type="evidence" value="ECO:0007669"/>
    <property type="project" value="UniProtKB-UniRule"/>
</dbReference>
<dbReference type="FunFam" id="3.40.50.150:FF:000005">
    <property type="entry name" value="Ribosomal RNA large subunit methyltransferase E"/>
    <property type="match status" value="1"/>
</dbReference>
<dbReference type="Gene3D" id="3.40.50.150">
    <property type="entry name" value="Vaccinia Virus protein VP39"/>
    <property type="match status" value="1"/>
</dbReference>
<dbReference type="HAMAP" id="MF_01547">
    <property type="entry name" value="RNA_methyltr_E"/>
    <property type="match status" value="1"/>
</dbReference>
<dbReference type="InterPro" id="IPR050082">
    <property type="entry name" value="RNA_methyltr_RlmE"/>
</dbReference>
<dbReference type="InterPro" id="IPR002877">
    <property type="entry name" value="RNA_MeTrfase_FtsJ_dom"/>
</dbReference>
<dbReference type="InterPro" id="IPR015507">
    <property type="entry name" value="rRNA-MeTfrase_E"/>
</dbReference>
<dbReference type="InterPro" id="IPR029063">
    <property type="entry name" value="SAM-dependent_MTases_sf"/>
</dbReference>
<dbReference type="NCBIfam" id="NF008390">
    <property type="entry name" value="PRK11188.1"/>
    <property type="match status" value="1"/>
</dbReference>
<dbReference type="PANTHER" id="PTHR10920">
    <property type="entry name" value="RIBOSOMAL RNA METHYLTRANSFERASE"/>
    <property type="match status" value="1"/>
</dbReference>
<dbReference type="PANTHER" id="PTHR10920:SF18">
    <property type="entry name" value="RRNA METHYLTRANSFERASE 2, MITOCHONDRIAL"/>
    <property type="match status" value="1"/>
</dbReference>
<dbReference type="Pfam" id="PF01728">
    <property type="entry name" value="FtsJ"/>
    <property type="match status" value="1"/>
</dbReference>
<dbReference type="PIRSF" id="PIRSF005461">
    <property type="entry name" value="23S_rRNA_mtase"/>
    <property type="match status" value="1"/>
</dbReference>
<dbReference type="SUPFAM" id="SSF53335">
    <property type="entry name" value="S-adenosyl-L-methionine-dependent methyltransferases"/>
    <property type="match status" value="1"/>
</dbReference>
<sequence>MATRITNQKLSKSSRAWMREHLDDPFVKKAQKEGYRARAAYKLLEIQEKYKLIKPGMTVVDLGAAPGSWSQIAGKLVGSKGLVIASDILPMDALPDVTFLQGDFREEAVFEKLLNILNGRQVDIVISDMAPNTSGNRAVDQPRQIYLCELALDFAQKVLGPNGQFVVKVFQGAGFDEFRKQVVDSFDVLKTAKPAASRARSKEVFLVGQGRKKALQ</sequence>
<name>RLME_ACIB3</name>
<proteinExistence type="inferred from homology"/>
<protein>
    <recommendedName>
        <fullName evidence="1">Ribosomal RNA large subunit methyltransferase E</fullName>
        <ecNumber evidence="1">2.1.1.166</ecNumber>
    </recommendedName>
    <alternativeName>
        <fullName evidence="1">23S rRNA Um2552 methyltransferase</fullName>
    </alternativeName>
    <alternativeName>
        <fullName evidence="1">rRNA (uridine-2'-O-)-methyltransferase</fullName>
    </alternativeName>
</protein>
<keyword id="KW-0963">Cytoplasm</keyword>
<keyword id="KW-0489">Methyltransferase</keyword>
<keyword id="KW-0698">rRNA processing</keyword>
<keyword id="KW-0949">S-adenosyl-L-methionine</keyword>
<keyword id="KW-0808">Transferase</keyword>
<comment type="function">
    <text evidence="1">Specifically methylates the uridine in position 2552 of 23S rRNA at the 2'-O position of the ribose in the fully assembled 50S ribosomal subunit.</text>
</comment>
<comment type="catalytic activity">
    <reaction evidence="1">
        <text>uridine(2552) in 23S rRNA + S-adenosyl-L-methionine = 2'-O-methyluridine(2552) in 23S rRNA + S-adenosyl-L-homocysteine + H(+)</text>
        <dbReference type="Rhea" id="RHEA:42720"/>
        <dbReference type="Rhea" id="RHEA-COMP:10202"/>
        <dbReference type="Rhea" id="RHEA-COMP:10203"/>
        <dbReference type="ChEBI" id="CHEBI:15378"/>
        <dbReference type="ChEBI" id="CHEBI:57856"/>
        <dbReference type="ChEBI" id="CHEBI:59789"/>
        <dbReference type="ChEBI" id="CHEBI:65315"/>
        <dbReference type="ChEBI" id="CHEBI:74478"/>
        <dbReference type="EC" id="2.1.1.166"/>
    </reaction>
</comment>
<comment type="subcellular location">
    <subcellularLocation>
        <location evidence="1">Cytoplasm</location>
    </subcellularLocation>
</comment>
<comment type="similarity">
    <text evidence="1">Belongs to the class I-like SAM-binding methyltransferase superfamily. RNA methyltransferase RlmE family.</text>
</comment>
<gene>
    <name evidence="1" type="primary">rlmE</name>
    <name evidence="1" type="synonym">ftsJ</name>
    <name evidence="1" type="synonym">rrmJ</name>
    <name type="ordered locus">ABBFA_000791</name>
</gene>
<reference key="1">
    <citation type="journal article" date="2008" name="J. Bacteriol.">
        <title>Comparative genome sequence analysis of multidrug-resistant Acinetobacter baumannii.</title>
        <authorList>
            <person name="Adams M.D."/>
            <person name="Goglin K."/>
            <person name="Molyneaux N."/>
            <person name="Hujer K.M."/>
            <person name="Lavender H."/>
            <person name="Jamison J.J."/>
            <person name="MacDonald I.J."/>
            <person name="Martin K.M."/>
            <person name="Russo T."/>
            <person name="Campagnari A.A."/>
            <person name="Hujer A.M."/>
            <person name="Bonomo R.A."/>
            <person name="Gill S.R."/>
        </authorList>
    </citation>
    <scope>NUCLEOTIDE SEQUENCE [LARGE SCALE GENOMIC DNA]</scope>
    <source>
        <strain>AB307-0294</strain>
    </source>
</reference>
<accession>B7GY18</accession>